<comment type="function">
    <text evidence="1">Plays an important role in the de novo pathway of purine nucleotide biosynthesis. Catalyzes the first committed step in the biosynthesis of AMP from IMP.</text>
</comment>
<comment type="catalytic activity">
    <reaction evidence="1">
        <text>IMP + L-aspartate + GTP = N(6)-(1,2-dicarboxyethyl)-AMP + GDP + phosphate + 2 H(+)</text>
        <dbReference type="Rhea" id="RHEA:15753"/>
        <dbReference type="ChEBI" id="CHEBI:15378"/>
        <dbReference type="ChEBI" id="CHEBI:29991"/>
        <dbReference type="ChEBI" id="CHEBI:37565"/>
        <dbReference type="ChEBI" id="CHEBI:43474"/>
        <dbReference type="ChEBI" id="CHEBI:57567"/>
        <dbReference type="ChEBI" id="CHEBI:58053"/>
        <dbReference type="ChEBI" id="CHEBI:58189"/>
        <dbReference type="EC" id="6.3.4.4"/>
    </reaction>
</comment>
<comment type="cofactor">
    <cofactor evidence="1">
        <name>Mg(2+)</name>
        <dbReference type="ChEBI" id="CHEBI:18420"/>
    </cofactor>
    <text evidence="1">Binds 1 Mg(2+) ion per subunit.</text>
</comment>
<comment type="pathway">
    <text evidence="1">Purine metabolism; AMP biosynthesis via de novo pathway; AMP from IMP: step 1/2.</text>
</comment>
<comment type="subunit">
    <text evidence="1">Homodimer.</text>
</comment>
<comment type="subcellular location">
    <subcellularLocation>
        <location evidence="1">Cytoplasm</location>
    </subcellularLocation>
</comment>
<comment type="similarity">
    <text evidence="1">Belongs to the adenylosuccinate synthetase family.</text>
</comment>
<reference key="1">
    <citation type="journal article" date="2008" name="Genomics">
        <title>Characterization of ST-4821 complex, a unique Neisseria meningitidis clone.</title>
        <authorList>
            <person name="Peng J."/>
            <person name="Yang L."/>
            <person name="Yang F."/>
            <person name="Yang J."/>
            <person name="Yan Y."/>
            <person name="Nie H."/>
            <person name="Zhang X."/>
            <person name="Xiong Z."/>
            <person name="Jiang Y."/>
            <person name="Cheng F."/>
            <person name="Xu X."/>
            <person name="Chen S."/>
            <person name="Sun L."/>
            <person name="Li W."/>
            <person name="Shen Y."/>
            <person name="Shao Z."/>
            <person name="Liang X."/>
            <person name="Xu J."/>
            <person name="Jin Q."/>
        </authorList>
    </citation>
    <scope>NUCLEOTIDE SEQUENCE [LARGE SCALE GENOMIC DNA]</scope>
    <source>
        <strain>053442</strain>
    </source>
</reference>
<gene>
    <name evidence="1" type="primary">purA</name>
    <name type="ordered locus">NMCC_0779</name>
</gene>
<protein>
    <recommendedName>
        <fullName evidence="1">Adenylosuccinate synthetase</fullName>
        <shortName evidence="1">AMPSase</shortName>
        <shortName evidence="1">AdSS</shortName>
        <ecNumber evidence="1">6.3.4.4</ecNumber>
    </recommendedName>
    <alternativeName>
        <fullName evidence="1">IMP--aspartate ligase</fullName>
    </alternativeName>
</protein>
<feature type="chain" id="PRO_0000337004" description="Adenylosuccinate synthetase">
    <location>
        <begin position="1"/>
        <end position="432"/>
    </location>
</feature>
<feature type="active site" description="Proton acceptor" evidence="1">
    <location>
        <position position="14"/>
    </location>
</feature>
<feature type="active site" description="Proton donor" evidence="1">
    <location>
        <position position="42"/>
    </location>
</feature>
<feature type="binding site" evidence="1">
    <location>
        <begin position="13"/>
        <end position="19"/>
    </location>
    <ligand>
        <name>GTP</name>
        <dbReference type="ChEBI" id="CHEBI:37565"/>
    </ligand>
</feature>
<feature type="binding site" description="in other chain" evidence="1">
    <location>
        <begin position="14"/>
        <end position="17"/>
    </location>
    <ligand>
        <name>IMP</name>
        <dbReference type="ChEBI" id="CHEBI:58053"/>
        <note>ligand shared between dimeric partners</note>
    </ligand>
</feature>
<feature type="binding site" evidence="1">
    <location>
        <position position="14"/>
    </location>
    <ligand>
        <name>Mg(2+)</name>
        <dbReference type="ChEBI" id="CHEBI:18420"/>
    </ligand>
</feature>
<feature type="binding site" description="in other chain" evidence="1">
    <location>
        <begin position="39"/>
        <end position="42"/>
    </location>
    <ligand>
        <name>IMP</name>
        <dbReference type="ChEBI" id="CHEBI:58053"/>
        <note>ligand shared between dimeric partners</note>
    </ligand>
</feature>
<feature type="binding site" evidence="1">
    <location>
        <begin position="41"/>
        <end position="43"/>
    </location>
    <ligand>
        <name>GTP</name>
        <dbReference type="ChEBI" id="CHEBI:37565"/>
    </ligand>
</feature>
<feature type="binding site" evidence="1">
    <location>
        <position position="41"/>
    </location>
    <ligand>
        <name>Mg(2+)</name>
        <dbReference type="ChEBI" id="CHEBI:18420"/>
    </ligand>
</feature>
<feature type="binding site" description="in other chain" evidence="1">
    <location>
        <position position="131"/>
    </location>
    <ligand>
        <name>IMP</name>
        <dbReference type="ChEBI" id="CHEBI:58053"/>
        <note>ligand shared between dimeric partners</note>
    </ligand>
</feature>
<feature type="binding site" evidence="1">
    <location>
        <position position="145"/>
    </location>
    <ligand>
        <name>IMP</name>
        <dbReference type="ChEBI" id="CHEBI:58053"/>
        <note>ligand shared between dimeric partners</note>
    </ligand>
</feature>
<feature type="binding site" description="in other chain" evidence="1">
    <location>
        <position position="226"/>
    </location>
    <ligand>
        <name>IMP</name>
        <dbReference type="ChEBI" id="CHEBI:58053"/>
        <note>ligand shared between dimeric partners</note>
    </ligand>
</feature>
<feature type="binding site" description="in other chain" evidence="1">
    <location>
        <position position="241"/>
    </location>
    <ligand>
        <name>IMP</name>
        <dbReference type="ChEBI" id="CHEBI:58053"/>
        <note>ligand shared between dimeric partners</note>
    </ligand>
</feature>
<feature type="binding site" evidence="1">
    <location>
        <begin position="301"/>
        <end position="307"/>
    </location>
    <ligand>
        <name>substrate</name>
    </ligand>
</feature>
<feature type="binding site" description="in other chain" evidence="1">
    <location>
        <position position="305"/>
    </location>
    <ligand>
        <name>IMP</name>
        <dbReference type="ChEBI" id="CHEBI:58053"/>
        <note>ligand shared between dimeric partners</note>
    </ligand>
</feature>
<feature type="binding site" evidence="1">
    <location>
        <position position="307"/>
    </location>
    <ligand>
        <name>GTP</name>
        <dbReference type="ChEBI" id="CHEBI:37565"/>
    </ligand>
</feature>
<feature type="binding site" evidence="1">
    <location>
        <begin position="333"/>
        <end position="335"/>
    </location>
    <ligand>
        <name>GTP</name>
        <dbReference type="ChEBI" id="CHEBI:37565"/>
    </ligand>
</feature>
<feature type="binding site" evidence="1">
    <location>
        <begin position="416"/>
        <end position="418"/>
    </location>
    <ligand>
        <name>GTP</name>
        <dbReference type="ChEBI" id="CHEBI:37565"/>
    </ligand>
</feature>
<keyword id="KW-0963">Cytoplasm</keyword>
<keyword id="KW-0342">GTP-binding</keyword>
<keyword id="KW-0436">Ligase</keyword>
<keyword id="KW-0460">Magnesium</keyword>
<keyword id="KW-0479">Metal-binding</keyword>
<keyword id="KW-0547">Nucleotide-binding</keyword>
<keyword id="KW-0658">Purine biosynthesis</keyword>
<sequence length="432" mass="46153">MAKNVVVIGAQWGDEGKGKIVDWLAEEAGGVVRFQGGHNAGHTLVVGGKKTILRLIPSGILHESLDCFIGSGVVVSPEALLGEIDELNAAGVKNVEGRLKIAPTCPLILPYHIALDQAREASRGKGKIGTTGRGIGPAYEDKVARRAIRAADLLHPEKLREKLDAVLAYYNVQLQHLHNAEPVKAEDVMAVIEKVAPRIAPMITDVSRVLNEKNKNGEKLLFEGAQGALLDIDYGTYPFVTSSNCLAGAASAGAGVGPQMLDYVLGIVKAYTTRVGSGPFPTELFDEVGAGLAERGHEFGSVTGRARRCGWFDAAALKRSIQINGISGMCITKLDVMDGVETINICVGYELPDGGKTDILPCGSDAVETCKPIYETMEGWKESTFGIKNYEELPDNAKAYLKRIEEVCGAPVAIVSTGPDREETIVLHHPFA</sequence>
<name>PURA_NEIM0</name>
<accession>A9M3P7</accession>
<dbReference type="EC" id="6.3.4.4" evidence="1"/>
<dbReference type="EMBL" id="CP000381">
    <property type="protein sequence ID" value="ABX72972.1"/>
    <property type="molecule type" value="Genomic_DNA"/>
</dbReference>
<dbReference type="RefSeq" id="WP_012221487.1">
    <property type="nucleotide sequence ID" value="NC_010120.1"/>
</dbReference>
<dbReference type="SMR" id="A9M3P7"/>
<dbReference type="KEGG" id="nmn:NMCC_0779"/>
<dbReference type="HOGENOM" id="CLU_029848_0_0_4"/>
<dbReference type="UniPathway" id="UPA00075">
    <property type="reaction ID" value="UER00335"/>
</dbReference>
<dbReference type="Proteomes" id="UP000001177">
    <property type="component" value="Chromosome"/>
</dbReference>
<dbReference type="GO" id="GO:0005737">
    <property type="term" value="C:cytoplasm"/>
    <property type="evidence" value="ECO:0007669"/>
    <property type="project" value="UniProtKB-SubCell"/>
</dbReference>
<dbReference type="GO" id="GO:0004019">
    <property type="term" value="F:adenylosuccinate synthase activity"/>
    <property type="evidence" value="ECO:0007669"/>
    <property type="project" value="UniProtKB-UniRule"/>
</dbReference>
<dbReference type="GO" id="GO:0005525">
    <property type="term" value="F:GTP binding"/>
    <property type="evidence" value="ECO:0007669"/>
    <property type="project" value="UniProtKB-UniRule"/>
</dbReference>
<dbReference type="GO" id="GO:0000287">
    <property type="term" value="F:magnesium ion binding"/>
    <property type="evidence" value="ECO:0007669"/>
    <property type="project" value="UniProtKB-UniRule"/>
</dbReference>
<dbReference type="GO" id="GO:0044208">
    <property type="term" value="P:'de novo' AMP biosynthetic process"/>
    <property type="evidence" value="ECO:0007669"/>
    <property type="project" value="UniProtKB-UniRule"/>
</dbReference>
<dbReference type="GO" id="GO:0046040">
    <property type="term" value="P:IMP metabolic process"/>
    <property type="evidence" value="ECO:0007669"/>
    <property type="project" value="TreeGrafter"/>
</dbReference>
<dbReference type="CDD" id="cd03108">
    <property type="entry name" value="AdSS"/>
    <property type="match status" value="1"/>
</dbReference>
<dbReference type="FunFam" id="1.10.300.10:FF:000001">
    <property type="entry name" value="Adenylosuccinate synthetase"/>
    <property type="match status" value="1"/>
</dbReference>
<dbReference type="FunFam" id="3.90.170.10:FF:000001">
    <property type="entry name" value="Adenylosuccinate synthetase"/>
    <property type="match status" value="1"/>
</dbReference>
<dbReference type="Gene3D" id="3.40.440.10">
    <property type="entry name" value="Adenylosuccinate Synthetase, subunit A, domain 1"/>
    <property type="match status" value="1"/>
</dbReference>
<dbReference type="Gene3D" id="1.10.300.10">
    <property type="entry name" value="Adenylosuccinate Synthetase, subunit A, domain 2"/>
    <property type="match status" value="1"/>
</dbReference>
<dbReference type="Gene3D" id="3.90.170.10">
    <property type="entry name" value="Adenylosuccinate Synthetase, subunit A, domain 3"/>
    <property type="match status" value="1"/>
</dbReference>
<dbReference type="HAMAP" id="MF_00011">
    <property type="entry name" value="Adenylosucc_synth"/>
    <property type="match status" value="1"/>
</dbReference>
<dbReference type="InterPro" id="IPR018220">
    <property type="entry name" value="Adenylosuccin_syn_GTP-bd"/>
</dbReference>
<dbReference type="InterPro" id="IPR033128">
    <property type="entry name" value="Adenylosuccin_syn_Lys_AS"/>
</dbReference>
<dbReference type="InterPro" id="IPR042109">
    <property type="entry name" value="Adenylosuccinate_synth_dom1"/>
</dbReference>
<dbReference type="InterPro" id="IPR042110">
    <property type="entry name" value="Adenylosuccinate_synth_dom2"/>
</dbReference>
<dbReference type="InterPro" id="IPR042111">
    <property type="entry name" value="Adenylosuccinate_synth_dom3"/>
</dbReference>
<dbReference type="InterPro" id="IPR001114">
    <property type="entry name" value="Adenylosuccinate_synthetase"/>
</dbReference>
<dbReference type="InterPro" id="IPR027417">
    <property type="entry name" value="P-loop_NTPase"/>
</dbReference>
<dbReference type="NCBIfam" id="NF002223">
    <property type="entry name" value="PRK01117.1"/>
    <property type="match status" value="1"/>
</dbReference>
<dbReference type="NCBIfam" id="TIGR00184">
    <property type="entry name" value="purA"/>
    <property type="match status" value="1"/>
</dbReference>
<dbReference type="PANTHER" id="PTHR11846">
    <property type="entry name" value="ADENYLOSUCCINATE SYNTHETASE"/>
    <property type="match status" value="1"/>
</dbReference>
<dbReference type="PANTHER" id="PTHR11846:SF0">
    <property type="entry name" value="ADENYLOSUCCINATE SYNTHETASE"/>
    <property type="match status" value="1"/>
</dbReference>
<dbReference type="Pfam" id="PF00709">
    <property type="entry name" value="Adenylsucc_synt"/>
    <property type="match status" value="1"/>
</dbReference>
<dbReference type="SMART" id="SM00788">
    <property type="entry name" value="Adenylsucc_synt"/>
    <property type="match status" value="1"/>
</dbReference>
<dbReference type="SUPFAM" id="SSF52540">
    <property type="entry name" value="P-loop containing nucleoside triphosphate hydrolases"/>
    <property type="match status" value="1"/>
</dbReference>
<dbReference type="PROSITE" id="PS01266">
    <property type="entry name" value="ADENYLOSUCCIN_SYN_1"/>
    <property type="match status" value="1"/>
</dbReference>
<dbReference type="PROSITE" id="PS00513">
    <property type="entry name" value="ADENYLOSUCCIN_SYN_2"/>
    <property type="match status" value="1"/>
</dbReference>
<proteinExistence type="inferred from homology"/>
<evidence type="ECO:0000255" key="1">
    <source>
        <dbReference type="HAMAP-Rule" id="MF_00011"/>
    </source>
</evidence>
<organism>
    <name type="scientific">Neisseria meningitidis serogroup C (strain 053442)</name>
    <dbReference type="NCBI Taxonomy" id="374833"/>
    <lineage>
        <taxon>Bacteria</taxon>
        <taxon>Pseudomonadati</taxon>
        <taxon>Pseudomonadota</taxon>
        <taxon>Betaproteobacteria</taxon>
        <taxon>Neisseriales</taxon>
        <taxon>Neisseriaceae</taxon>
        <taxon>Neisseria</taxon>
    </lineage>
</organism>